<comment type="function">
    <text evidence="1">Rep helicase is a single-stranded DNA-dependent ATPase involved in DNA replication; it can initiate unwinding at a nick in the DNA. It binds to the single-stranded DNA and acts in a progressive fashion along the DNA in the 3' to 5' direction.</text>
</comment>
<comment type="catalytic activity">
    <reaction evidence="1">
        <text>Couples ATP hydrolysis with the unwinding of duplex DNA by translocating in the 3'-5' direction.</text>
        <dbReference type="EC" id="5.6.2.4"/>
    </reaction>
</comment>
<comment type="catalytic activity">
    <reaction evidence="1">
        <text>ATP + H2O = ADP + phosphate + H(+)</text>
        <dbReference type="Rhea" id="RHEA:13065"/>
        <dbReference type="ChEBI" id="CHEBI:15377"/>
        <dbReference type="ChEBI" id="CHEBI:15378"/>
        <dbReference type="ChEBI" id="CHEBI:30616"/>
        <dbReference type="ChEBI" id="CHEBI:43474"/>
        <dbReference type="ChEBI" id="CHEBI:456216"/>
        <dbReference type="EC" id="5.6.2.4"/>
    </reaction>
</comment>
<comment type="subunit">
    <text evidence="1">Homodimer.</text>
</comment>
<comment type="similarity">
    <text evidence="1">Belongs to the helicase family. UvrD subfamily.</text>
</comment>
<dbReference type="EC" id="5.6.2.4" evidence="1"/>
<dbReference type="EMBL" id="AF008210">
    <property type="protein sequence ID" value="AAC38127.1"/>
    <property type="molecule type" value="Genomic_DNA"/>
</dbReference>
<dbReference type="EMBL" id="AE013218">
    <property type="protein sequence ID" value="AAM68108.1"/>
    <property type="molecule type" value="Genomic_DNA"/>
</dbReference>
<dbReference type="RefSeq" id="WP_011054074.1">
    <property type="nucleotide sequence ID" value="NC_004061.1"/>
</dbReference>
<dbReference type="SMR" id="O51889"/>
<dbReference type="STRING" id="198804.BUsg_574"/>
<dbReference type="GeneID" id="93004055"/>
<dbReference type="KEGG" id="bas:BUsg_574"/>
<dbReference type="eggNOG" id="COG0210">
    <property type="taxonomic scope" value="Bacteria"/>
</dbReference>
<dbReference type="HOGENOM" id="CLU_004585_5_2_6"/>
<dbReference type="Proteomes" id="UP000000416">
    <property type="component" value="Chromosome"/>
</dbReference>
<dbReference type="GO" id="GO:0005829">
    <property type="term" value="C:cytosol"/>
    <property type="evidence" value="ECO:0007669"/>
    <property type="project" value="TreeGrafter"/>
</dbReference>
<dbReference type="GO" id="GO:0043138">
    <property type="term" value="F:3'-5' DNA helicase activity"/>
    <property type="evidence" value="ECO:0007669"/>
    <property type="project" value="UniProtKB-UniRule"/>
</dbReference>
<dbReference type="GO" id="GO:0005524">
    <property type="term" value="F:ATP binding"/>
    <property type="evidence" value="ECO:0007669"/>
    <property type="project" value="UniProtKB-UniRule"/>
</dbReference>
<dbReference type="GO" id="GO:0016887">
    <property type="term" value="F:ATP hydrolysis activity"/>
    <property type="evidence" value="ECO:0007669"/>
    <property type="project" value="RHEA"/>
</dbReference>
<dbReference type="GO" id="GO:0003697">
    <property type="term" value="F:single-stranded DNA binding"/>
    <property type="evidence" value="ECO:0007669"/>
    <property type="project" value="UniProtKB-UniRule"/>
</dbReference>
<dbReference type="GO" id="GO:0006260">
    <property type="term" value="P:DNA replication"/>
    <property type="evidence" value="ECO:0007669"/>
    <property type="project" value="UniProtKB-KW"/>
</dbReference>
<dbReference type="GO" id="GO:0000725">
    <property type="term" value="P:recombinational repair"/>
    <property type="evidence" value="ECO:0007669"/>
    <property type="project" value="TreeGrafter"/>
</dbReference>
<dbReference type="CDD" id="cd17932">
    <property type="entry name" value="DEXQc_UvrD"/>
    <property type="match status" value="1"/>
</dbReference>
<dbReference type="CDD" id="cd18807">
    <property type="entry name" value="SF1_C_UvrD"/>
    <property type="match status" value="1"/>
</dbReference>
<dbReference type="Gene3D" id="1.10.10.160">
    <property type="match status" value="1"/>
</dbReference>
<dbReference type="Gene3D" id="3.40.50.300">
    <property type="entry name" value="P-loop containing nucleotide triphosphate hydrolases"/>
    <property type="match status" value="2"/>
</dbReference>
<dbReference type="Gene3D" id="1.10.486.10">
    <property type="entry name" value="PCRA, domain 4"/>
    <property type="match status" value="1"/>
</dbReference>
<dbReference type="HAMAP" id="MF_01920">
    <property type="entry name" value="Helicase_Rep"/>
    <property type="match status" value="1"/>
</dbReference>
<dbReference type="InterPro" id="IPR013986">
    <property type="entry name" value="DExx_box_DNA_helicase_dom_sf"/>
</dbReference>
<dbReference type="InterPro" id="IPR014017">
    <property type="entry name" value="DNA_helicase_UvrD-like_C"/>
</dbReference>
<dbReference type="InterPro" id="IPR000212">
    <property type="entry name" value="DNA_helicase_UvrD/REP"/>
</dbReference>
<dbReference type="InterPro" id="IPR005752">
    <property type="entry name" value="Helicase_Rep"/>
</dbReference>
<dbReference type="InterPro" id="IPR027417">
    <property type="entry name" value="P-loop_NTPase"/>
</dbReference>
<dbReference type="InterPro" id="IPR014016">
    <property type="entry name" value="UvrD-like_ATP-bd"/>
</dbReference>
<dbReference type="NCBIfam" id="TIGR01074">
    <property type="entry name" value="rep"/>
    <property type="match status" value="1"/>
</dbReference>
<dbReference type="PANTHER" id="PTHR11070:SF64">
    <property type="entry name" value="ATP-DEPENDENT DNA HELICASE REP"/>
    <property type="match status" value="1"/>
</dbReference>
<dbReference type="PANTHER" id="PTHR11070">
    <property type="entry name" value="UVRD / RECB / PCRA DNA HELICASE FAMILY MEMBER"/>
    <property type="match status" value="1"/>
</dbReference>
<dbReference type="Pfam" id="PF00580">
    <property type="entry name" value="UvrD-helicase"/>
    <property type="match status" value="1"/>
</dbReference>
<dbReference type="Pfam" id="PF13361">
    <property type="entry name" value="UvrD_C"/>
    <property type="match status" value="1"/>
</dbReference>
<dbReference type="SUPFAM" id="SSF52540">
    <property type="entry name" value="P-loop containing nucleoside triphosphate hydrolases"/>
    <property type="match status" value="1"/>
</dbReference>
<dbReference type="PROSITE" id="PS51198">
    <property type="entry name" value="UVRD_HELICASE_ATP_BIND"/>
    <property type="match status" value="1"/>
</dbReference>
<dbReference type="PROSITE" id="PS51217">
    <property type="entry name" value="UVRD_HELICASE_CTER"/>
    <property type="match status" value="1"/>
</dbReference>
<gene>
    <name evidence="1" type="primary">rep</name>
    <name type="ordered locus">BUsg_574</name>
</gene>
<keyword id="KW-0067">ATP-binding</keyword>
<keyword id="KW-0235">DNA replication</keyword>
<keyword id="KW-0238">DNA-binding</keyword>
<keyword id="KW-0347">Helicase</keyword>
<keyword id="KW-0378">Hydrolase</keyword>
<keyword id="KW-0413">Isomerase</keyword>
<keyword id="KW-0547">Nucleotide-binding</keyword>
<evidence type="ECO:0000255" key="1">
    <source>
        <dbReference type="HAMAP-Rule" id="MF_01920"/>
    </source>
</evidence>
<reference key="1">
    <citation type="journal article" date="1998" name="Curr. Microbiol.">
        <title>Sequence analysis of a 34.7-kb DNA segment from the genome of Buchnera aphidicola (endosymbiont of aphids) containing groEL, dnaA, the atp operon, gidA, and rho.</title>
        <authorList>
            <person name="Clark M.A."/>
            <person name="Baumann L."/>
            <person name="Baumann P."/>
        </authorList>
    </citation>
    <scope>NUCLEOTIDE SEQUENCE [GENOMIC DNA]</scope>
</reference>
<reference key="2">
    <citation type="journal article" date="2002" name="Science">
        <title>50 million years of genomic stasis in endosymbiotic bacteria.</title>
        <authorList>
            <person name="Tamas I."/>
            <person name="Klasson L."/>
            <person name="Canbaeck B."/>
            <person name="Naeslund A.K."/>
            <person name="Eriksson A.-S."/>
            <person name="Wernegreen J.J."/>
            <person name="Sandstroem J.P."/>
            <person name="Moran N.A."/>
            <person name="Andersson S.G.E."/>
        </authorList>
    </citation>
    <scope>NUCLEOTIDE SEQUENCE [LARGE SCALE GENOMIC DNA]</scope>
    <source>
        <strain>Sg</strain>
    </source>
</reference>
<organism>
    <name type="scientific">Buchnera aphidicola subsp. Schizaphis graminum (strain Sg)</name>
    <dbReference type="NCBI Taxonomy" id="198804"/>
    <lineage>
        <taxon>Bacteria</taxon>
        <taxon>Pseudomonadati</taxon>
        <taxon>Pseudomonadota</taxon>
        <taxon>Gammaproteobacteria</taxon>
        <taxon>Enterobacterales</taxon>
        <taxon>Erwiniaceae</taxon>
        <taxon>Buchnera</taxon>
    </lineage>
</organism>
<protein>
    <recommendedName>
        <fullName evidence="1">ATP-dependent DNA helicase Rep</fullName>
        <ecNumber evidence="1">5.6.2.4</ecNumber>
    </recommendedName>
    <alternativeName>
        <fullName evidence="1">DNA 3'-5' helicase Rep</fullName>
    </alternativeName>
</protein>
<name>REP_BUCAP</name>
<feature type="chain" id="PRO_0000102066" description="ATP-dependent DNA helicase Rep">
    <location>
        <begin position="1"/>
        <end position="658"/>
    </location>
</feature>
<feature type="domain" description="UvrD-like helicase ATP-binding" evidence="1">
    <location>
        <begin position="1"/>
        <end position="280"/>
    </location>
</feature>
<feature type="domain" description="UvrD-like helicase C-terminal" evidence="1">
    <location>
        <begin position="281"/>
        <end position="564"/>
    </location>
</feature>
<feature type="binding site" evidence="1">
    <location>
        <begin position="22"/>
        <end position="29"/>
    </location>
    <ligand>
        <name>ATP</name>
        <dbReference type="ChEBI" id="CHEBI:30616"/>
    </ligand>
</feature>
<feature type="binding site" evidence="1">
    <location>
        <position position="278"/>
    </location>
    <ligand>
        <name>ATP</name>
        <dbReference type="ChEBI" id="CHEBI:30616"/>
    </ligand>
</feature>
<sequence length="658" mass="77509">MSLNFNQKNAIELINGPCLILAGAGSGKTKVIINKIIYLINNCQYKPGNIIAVTFTNKAAHEIKVRLAKHLNLLQIKKMIISTFHSLGLEIIKKEINTLKFNSNFSLFDERDQMMLLKKICSKSIKNDTKLLKKLVFMISFWKNKFLTPLQVQLSAQSNLEKDFAFFYKQYTFHLRKSNILDFDDLICIPTSLLKNNQIIQNRWQKKISYLLVDEYQDTNNSQYELIKMLTNVNSNFTLVGDDDQSIYSWRGAKPQNLFLIKKDFPNLKIIKMEQNYRSYGRILKAANKLISNNLHYFKKKLFSNLEYGNKIKVIIGKNEKNEAEKIADKIIHECSNDIMQYKDYAILYRGNYQSQILEKTFLKKNIPYDISTNSSFFSRPEIKDLLSYLRLIVNPDDNHAFIRILNIPHRQIGLTTLNKLEELASKKNKSLFQISNDIEIKKILRERTVKKIKDFIYWIKKIIKLSLLKEDIILDKIINDIKYELWLTKILKEPKKIKTSINNIYTLSNWLKEMLRGNEFEKPMNLLQIVKKMTLRDILEKKIQINEIPKNRVQLMTLHSSKGLEFSSVFIIGMNEGILPNIKSINNDNIEEERRLTYVGMTRARKELFFTYCQTRIQYGQKLYTAPSRFLFELPQEDLQWEKDDYLDAFHTKEKKI</sequence>
<accession>O51889</accession>
<proteinExistence type="inferred from homology"/>